<name>RS15_POLSJ</name>
<reference key="1">
    <citation type="journal article" date="2008" name="Appl. Environ. Microbiol.">
        <title>The genome of Polaromonas sp. strain JS666: insights into the evolution of a hydrocarbon- and xenobiotic-degrading bacterium, and features of relevance to biotechnology.</title>
        <authorList>
            <person name="Mattes T.E."/>
            <person name="Alexander A.K."/>
            <person name="Richardson P.M."/>
            <person name="Munk A.C."/>
            <person name="Han C.S."/>
            <person name="Stothard P."/>
            <person name="Coleman N.V."/>
        </authorList>
    </citation>
    <scope>NUCLEOTIDE SEQUENCE [LARGE SCALE GENOMIC DNA]</scope>
    <source>
        <strain>JS666 / ATCC BAA-500</strain>
    </source>
</reference>
<proteinExistence type="inferred from homology"/>
<evidence type="ECO:0000255" key="1">
    <source>
        <dbReference type="HAMAP-Rule" id="MF_01343"/>
    </source>
</evidence>
<evidence type="ECO:0000305" key="2"/>
<protein>
    <recommendedName>
        <fullName evidence="1">Small ribosomal subunit protein uS15</fullName>
    </recommendedName>
    <alternativeName>
        <fullName evidence="2">30S ribosomal protein S15</fullName>
    </alternativeName>
</protein>
<accession>Q127W7</accession>
<sequence length="88" mass="9907">MIEKSIKAEIVKANARAANDTGSPEVQVALLTGRINELTPHFKANAKDHHGRRGLLRMVSRRRKLLDYLKSKDADRYTALIAKLGLRK</sequence>
<keyword id="KW-1185">Reference proteome</keyword>
<keyword id="KW-0687">Ribonucleoprotein</keyword>
<keyword id="KW-0689">Ribosomal protein</keyword>
<keyword id="KW-0694">RNA-binding</keyword>
<keyword id="KW-0699">rRNA-binding</keyword>
<dbReference type="EMBL" id="CP000316">
    <property type="protein sequence ID" value="ABE45175.1"/>
    <property type="molecule type" value="Genomic_DNA"/>
</dbReference>
<dbReference type="RefSeq" id="WP_011484170.1">
    <property type="nucleotide sequence ID" value="NC_007948.1"/>
</dbReference>
<dbReference type="SMR" id="Q127W7"/>
<dbReference type="STRING" id="296591.Bpro_3261"/>
<dbReference type="KEGG" id="pol:Bpro_3261"/>
<dbReference type="eggNOG" id="COG0184">
    <property type="taxonomic scope" value="Bacteria"/>
</dbReference>
<dbReference type="HOGENOM" id="CLU_148518_0_0_4"/>
<dbReference type="OrthoDB" id="9799262at2"/>
<dbReference type="Proteomes" id="UP000001983">
    <property type="component" value="Chromosome"/>
</dbReference>
<dbReference type="GO" id="GO:0022627">
    <property type="term" value="C:cytosolic small ribosomal subunit"/>
    <property type="evidence" value="ECO:0007669"/>
    <property type="project" value="TreeGrafter"/>
</dbReference>
<dbReference type="GO" id="GO:0019843">
    <property type="term" value="F:rRNA binding"/>
    <property type="evidence" value="ECO:0007669"/>
    <property type="project" value="UniProtKB-UniRule"/>
</dbReference>
<dbReference type="GO" id="GO:0003735">
    <property type="term" value="F:structural constituent of ribosome"/>
    <property type="evidence" value="ECO:0007669"/>
    <property type="project" value="InterPro"/>
</dbReference>
<dbReference type="GO" id="GO:0006412">
    <property type="term" value="P:translation"/>
    <property type="evidence" value="ECO:0007669"/>
    <property type="project" value="UniProtKB-UniRule"/>
</dbReference>
<dbReference type="CDD" id="cd00353">
    <property type="entry name" value="Ribosomal_S15p_S13e"/>
    <property type="match status" value="1"/>
</dbReference>
<dbReference type="FunFam" id="1.10.287.10:FF:000002">
    <property type="entry name" value="30S ribosomal protein S15"/>
    <property type="match status" value="1"/>
</dbReference>
<dbReference type="Gene3D" id="6.10.250.3130">
    <property type="match status" value="1"/>
</dbReference>
<dbReference type="Gene3D" id="1.10.287.10">
    <property type="entry name" value="S15/NS1, RNA-binding"/>
    <property type="match status" value="1"/>
</dbReference>
<dbReference type="HAMAP" id="MF_01343_B">
    <property type="entry name" value="Ribosomal_uS15_B"/>
    <property type="match status" value="1"/>
</dbReference>
<dbReference type="InterPro" id="IPR000589">
    <property type="entry name" value="Ribosomal_uS15"/>
</dbReference>
<dbReference type="InterPro" id="IPR005290">
    <property type="entry name" value="Ribosomal_uS15_bac-type"/>
</dbReference>
<dbReference type="InterPro" id="IPR009068">
    <property type="entry name" value="uS15_NS1_RNA-bd_sf"/>
</dbReference>
<dbReference type="NCBIfam" id="TIGR00952">
    <property type="entry name" value="S15_bact"/>
    <property type="match status" value="1"/>
</dbReference>
<dbReference type="PANTHER" id="PTHR23321">
    <property type="entry name" value="RIBOSOMAL PROTEIN S15, BACTERIAL AND ORGANELLAR"/>
    <property type="match status" value="1"/>
</dbReference>
<dbReference type="PANTHER" id="PTHR23321:SF26">
    <property type="entry name" value="SMALL RIBOSOMAL SUBUNIT PROTEIN US15M"/>
    <property type="match status" value="1"/>
</dbReference>
<dbReference type="Pfam" id="PF00312">
    <property type="entry name" value="Ribosomal_S15"/>
    <property type="match status" value="1"/>
</dbReference>
<dbReference type="SMART" id="SM01387">
    <property type="entry name" value="Ribosomal_S15"/>
    <property type="match status" value="1"/>
</dbReference>
<dbReference type="SUPFAM" id="SSF47060">
    <property type="entry name" value="S15/NS1 RNA-binding domain"/>
    <property type="match status" value="1"/>
</dbReference>
<dbReference type="PROSITE" id="PS00362">
    <property type="entry name" value="RIBOSOMAL_S15"/>
    <property type="match status" value="1"/>
</dbReference>
<comment type="function">
    <text evidence="1">One of the primary rRNA binding proteins, it binds directly to 16S rRNA where it helps nucleate assembly of the platform of the 30S subunit by binding and bridging several RNA helices of the 16S rRNA.</text>
</comment>
<comment type="function">
    <text evidence="1">Forms an intersubunit bridge (bridge B4) with the 23S rRNA of the 50S subunit in the ribosome.</text>
</comment>
<comment type="subunit">
    <text evidence="1">Part of the 30S ribosomal subunit. Forms a bridge to the 50S subunit in the 70S ribosome, contacting the 23S rRNA.</text>
</comment>
<comment type="similarity">
    <text evidence="1">Belongs to the universal ribosomal protein uS15 family.</text>
</comment>
<gene>
    <name evidence="1" type="primary">rpsO</name>
    <name type="ordered locus">Bpro_3261</name>
</gene>
<organism>
    <name type="scientific">Polaromonas sp. (strain JS666 / ATCC BAA-500)</name>
    <dbReference type="NCBI Taxonomy" id="296591"/>
    <lineage>
        <taxon>Bacteria</taxon>
        <taxon>Pseudomonadati</taxon>
        <taxon>Pseudomonadota</taxon>
        <taxon>Betaproteobacteria</taxon>
        <taxon>Burkholderiales</taxon>
        <taxon>Comamonadaceae</taxon>
        <taxon>Polaromonas</taxon>
    </lineage>
</organism>
<feature type="chain" id="PRO_1000054837" description="Small ribosomal subunit protein uS15">
    <location>
        <begin position="1"/>
        <end position="88"/>
    </location>
</feature>